<keyword id="KW-0067">ATP-binding</keyword>
<keyword id="KW-0963">Cytoplasm</keyword>
<keyword id="KW-0418">Kinase</keyword>
<keyword id="KW-0547">Nucleotide-binding</keyword>
<keyword id="KW-0665">Pyrimidine biosynthesis</keyword>
<keyword id="KW-0808">Transferase</keyword>
<sequence>MSEPNSDHGAGAAVGETRPLYSRVLLKLGGEMFGGGAVGLDPDVVHLVARQIAEVVRSGVQVAVVIGGGNFFRGAQLQQRGMERTRSDYMGMLGTVMNSLALQDFLEKEGIDTRVQTAITMGQVAEPYIPLRAVRHLEKGRVVIFGAGMGLPYFSTDTTAAQRALEIGAEVVLMAKAVDGVYTADPRKDPDAQLLTAITHREVIDRGLAVADATAFSLCMDNGMPILVFNLLVDGNIARAVAGEKIGTLVTT</sequence>
<reference key="1">
    <citation type="submission" date="2007-02" db="EMBL/GenBank/DDBJ databases">
        <title>Complete sequence of Mycobacterium sp. JLS.</title>
        <authorList>
            <consortium name="US DOE Joint Genome Institute"/>
            <person name="Copeland A."/>
            <person name="Lucas S."/>
            <person name="Lapidus A."/>
            <person name="Barry K."/>
            <person name="Detter J.C."/>
            <person name="Glavina del Rio T."/>
            <person name="Hammon N."/>
            <person name="Israni S."/>
            <person name="Dalin E."/>
            <person name="Tice H."/>
            <person name="Pitluck S."/>
            <person name="Chain P."/>
            <person name="Malfatti S."/>
            <person name="Shin M."/>
            <person name="Vergez L."/>
            <person name="Schmutz J."/>
            <person name="Larimer F."/>
            <person name="Land M."/>
            <person name="Hauser L."/>
            <person name="Kyrpides N."/>
            <person name="Mikhailova N."/>
            <person name="Miller C.D."/>
            <person name="Anderson A.J."/>
            <person name="Sims R.C."/>
            <person name="Richardson P."/>
        </authorList>
    </citation>
    <scope>NUCLEOTIDE SEQUENCE [LARGE SCALE GENOMIC DNA]</scope>
    <source>
        <strain>JLS</strain>
    </source>
</reference>
<protein>
    <recommendedName>
        <fullName evidence="1">Uridylate kinase</fullName>
        <shortName evidence="1">UK</shortName>
        <ecNumber evidence="1">2.7.4.22</ecNumber>
    </recommendedName>
    <alternativeName>
        <fullName evidence="1">Uridine monophosphate kinase</fullName>
        <shortName evidence="1">UMP kinase</shortName>
        <shortName evidence="1">UMPK</shortName>
    </alternativeName>
</protein>
<gene>
    <name evidence="1" type="primary">pyrH</name>
    <name type="ordered locus">Mjls_1984</name>
</gene>
<organism>
    <name type="scientific">Mycobacterium sp. (strain JLS)</name>
    <dbReference type="NCBI Taxonomy" id="164757"/>
    <lineage>
        <taxon>Bacteria</taxon>
        <taxon>Bacillati</taxon>
        <taxon>Actinomycetota</taxon>
        <taxon>Actinomycetes</taxon>
        <taxon>Mycobacteriales</taxon>
        <taxon>Mycobacteriaceae</taxon>
        <taxon>Mycobacterium</taxon>
    </lineage>
</organism>
<evidence type="ECO:0000255" key="1">
    <source>
        <dbReference type="HAMAP-Rule" id="MF_01220"/>
    </source>
</evidence>
<proteinExistence type="inferred from homology"/>
<dbReference type="EC" id="2.7.4.22" evidence="1"/>
<dbReference type="EMBL" id="CP000580">
    <property type="protein sequence ID" value="ABN97771.1"/>
    <property type="molecule type" value="Genomic_DNA"/>
</dbReference>
<dbReference type="SMR" id="A3PXZ4"/>
<dbReference type="KEGG" id="mjl:Mjls_1984"/>
<dbReference type="HOGENOM" id="CLU_033861_0_0_11"/>
<dbReference type="BioCyc" id="MSP164757:G1G8C-2004-MONOMER"/>
<dbReference type="UniPathway" id="UPA00159">
    <property type="reaction ID" value="UER00275"/>
</dbReference>
<dbReference type="GO" id="GO:0005737">
    <property type="term" value="C:cytoplasm"/>
    <property type="evidence" value="ECO:0007669"/>
    <property type="project" value="UniProtKB-SubCell"/>
</dbReference>
<dbReference type="GO" id="GO:0005524">
    <property type="term" value="F:ATP binding"/>
    <property type="evidence" value="ECO:0007669"/>
    <property type="project" value="UniProtKB-KW"/>
</dbReference>
<dbReference type="GO" id="GO:0033862">
    <property type="term" value="F:UMP kinase activity"/>
    <property type="evidence" value="ECO:0007669"/>
    <property type="project" value="UniProtKB-EC"/>
</dbReference>
<dbReference type="GO" id="GO:0044210">
    <property type="term" value="P:'de novo' CTP biosynthetic process"/>
    <property type="evidence" value="ECO:0007669"/>
    <property type="project" value="UniProtKB-UniRule"/>
</dbReference>
<dbReference type="GO" id="GO:0006225">
    <property type="term" value="P:UDP biosynthetic process"/>
    <property type="evidence" value="ECO:0007669"/>
    <property type="project" value="TreeGrafter"/>
</dbReference>
<dbReference type="CDD" id="cd04254">
    <property type="entry name" value="AAK_UMPK-PyrH-Ec"/>
    <property type="match status" value="1"/>
</dbReference>
<dbReference type="FunFam" id="3.40.1160.10:FF:000001">
    <property type="entry name" value="Uridylate kinase"/>
    <property type="match status" value="1"/>
</dbReference>
<dbReference type="Gene3D" id="3.40.1160.10">
    <property type="entry name" value="Acetylglutamate kinase-like"/>
    <property type="match status" value="1"/>
</dbReference>
<dbReference type="HAMAP" id="MF_01220_B">
    <property type="entry name" value="PyrH_B"/>
    <property type="match status" value="1"/>
</dbReference>
<dbReference type="InterPro" id="IPR036393">
    <property type="entry name" value="AceGlu_kinase-like_sf"/>
</dbReference>
<dbReference type="InterPro" id="IPR001048">
    <property type="entry name" value="Asp/Glu/Uridylate_kinase"/>
</dbReference>
<dbReference type="InterPro" id="IPR011817">
    <property type="entry name" value="Uridylate_kinase"/>
</dbReference>
<dbReference type="InterPro" id="IPR015963">
    <property type="entry name" value="Uridylate_kinase_bac"/>
</dbReference>
<dbReference type="NCBIfam" id="TIGR02075">
    <property type="entry name" value="pyrH_bact"/>
    <property type="match status" value="1"/>
</dbReference>
<dbReference type="PANTHER" id="PTHR42833">
    <property type="entry name" value="URIDYLATE KINASE"/>
    <property type="match status" value="1"/>
</dbReference>
<dbReference type="PANTHER" id="PTHR42833:SF4">
    <property type="entry name" value="URIDYLATE KINASE PUMPKIN, CHLOROPLASTIC"/>
    <property type="match status" value="1"/>
</dbReference>
<dbReference type="Pfam" id="PF00696">
    <property type="entry name" value="AA_kinase"/>
    <property type="match status" value="1"/>
</dbReference>
<dbReference type="PIRSF" id="PIRSF005650">
    <property type="entry name" value="Uridylate_kin"/>
    <property type="match status" value="1"/>
</dbReference>
<dbReference type="SUPFAM" id="SSF53633">
    <property type="entry name" value="Carbamate kinase-like"/>
    <property type="match status" value="1"/>
</dbReference>
<comment type="function">
    <text evidence="1">Catalyzes the reversible phosphorylation of UMP to UDP.</text>
</comment>
<comment type="catalytic activity">
    <reaction evidence="1">
        <text>UMP + ATP = UDP + ADP</text>
        <dbReference type="Rhea" id="RHEA:24400"/>
        <dbReference type="ChEBI" id="CHEBI:30616"/>
        <dbReference type="ChEBI" id="CHEBI:57865"/>
        <dbReference type="ChEBI" id="CHEBI:58223"/>
        <dbReference type="ChEBI" id="CHEBI:456216"/>
        <dbReference type="EC" id="2.7.4.22"/>
    </reaction>
</comment>
<comment type="activity regulation">
    <text evidence="1">Inhibited by UTP.</text>
</comment>
<comment type="pathway">
    <text evidence="1">Pyrimidine metabolism; CTP biosynthesis via de novo pathway; UDP from UMP (UMPK route): step 1/1.</text>
</comment>
<comment type="subunit">
    <text evidence="1">Homohexamer.</text>
</comment>
<comment type="subcellular location">
    <subcellularLocation>
        <location evidence="1">Cytoplasm</location>
    </subcellularLocation>
</comment>
<comment type="similarity">
    <text evidence="1">Belongs to the UMP kinase family.</text>
</comment>
<accession>A3PXZ4</accession>
<name>PYRH_MYCSJ</name>
<feature type="chain" id="PRO_0000323888" description="Uridylate kinase">
    <location>
        <begin position="1"/>
        <end position="252"/>
    </location>
</feature>
<feature type="binding site" evidence="1">
    <location>
        <begin position="27"/>
        <end position="30"/>
    </location>
    <ligand>
        <name>ATP</name>
        <dbReference type="ChEBI" id="CHEBI:30616"/>
    </ligand>
</feature>
<feature type="binding site" evidence="1">
    <location>
        <position position="68"/>
    </location>
    <ligand>
        <name>UMP</name>
        <dbReference type="ChEBI" id="CHEBI:57865"/>
    </ligand>
</feature>
<feature type="binding site" evidence="1">
    <location>
        <position position="69"/>
    </location>
    <ligand>
        <name>ATP</name>
        <dbReference type="ChEBI" id="CHEBI:30616"/>
    </ligand>
</feature>
<feature type="binding site" evidence="1">
    <location>
        <position position="73"/>
    </location>
    <ligand>
        <name>ATP</name>
        <dbReference type="ChEBI" id="CHEBI:30616"/>
    </ligand>
</feature>
<feature type="binding site" evidence="1">
    <location>
        <position position="88"/>
    </location>
    <ligand>
        <name>UMP</name>
        <dbReference type="ChEBI" id="CHEBI:57865"/>
    </ligand>
</feature>
<feature type="binding site" evidence="1">
    <location>
        <begin position="149"/>
        <end position="156"/>
    </location>
    <ligand>
        <name>UMP</name>
        <dbReference type="ChEBI" id="CHEBI:57865"/>
    </ligand>
</feature>
<feature type="binding site" evidence="1">
    <location>
        <position position="182"/>
    </location>
    <ligand>
        <name>ATP</name>
        <dbReference type="ChEBI" id="CHEBI:30616"/>
    </ligand>
</feature>
<feature type="binding site" evidence="1">
    <location>
        <position position="185"/>
    </location>
    <ligand>
        <name>ATP</name>
        <dbReference type="ChEBI" id="CHEBI:30616"/>
    </ligand>
</feature>